<protein>
    <recommendedName>
        <fullName evidence="1">tRNA-2-methylthio-N(6)-dimethylallyladenosine synthase</fullName>
        <ecNumber evidence="1">2.8.4.3</ecNumber>
    </recommendedName>
    <alternativeName>
        <fullName evidence="1">(Dimethylallyl)adenosine tRNA methylthiotransferase MiaB</fullName>
    </alternativeName>
    <alternativeName>
        <fullName evidence="1">tRNA-i(6)A37 methylthiotransferase</fullName>
    </alternativeName>
</protein>
<comment type="function">
    <text evidence="1">Catalyzes the methylthiolation of N6-(dimethylallyl)adenosine (i(6)A), leading to the formation of 2-methylthio-N6-(dimethylallyl)adenosine (ms(2)i(6)A) at position 37 in tRNAs that read codons beginning with uridine.</text>
</comment>
<comment type="catalytic activity">
    <reaction evidence="1">
        <text>N(6)-dimethylallyladenosine(37) in tRNA + (sulfur carrier)-SH + AH2 + 2 S-adenosyl-L-methionine = 2-methylsulfanyl-N(6)-dimethylallyladenosine(37) in tRNA + (sulfur carrier)-H + 5'-deoxyadenosine + L-methionine + A + S-adenosyl-L-homocysteine + 2 H(+)</text>
        <dbReference type="Rhea" id="RHEA:37067"/>
        <dbReference type="Rhea" id="RHEA-COMP:10375"/>
        <dbReference type="Rhea" id="RHEA-COMP:10376"/>
        <dbReference type="Rhea" id="RHEA-COMP:14737"/>
        <dbReference type="Rhea" id="RHEA-COMP:14739"/>
        <dbReference type="ChEBI" id="CHEBI:13193"/>
        <dbReference type="ChEBI" id="CHEBI:15378"/>
        <dbReference type="ChEBI" id="CHEBI:17319"/>
        <dbReference type="ChEBI" id="CHEBI:17499"/>
        <dbReference type="ChEBI" id="CHEBI:29917"/>
        <dbReference type="ChEBI" id="CHEBI:57844"/>
        <dbReference type="ChEBI" id="CHEBI:57856"/>
        <dbReference type="ChEBI" id="CHEBI:59789"/>
        <dbReference type="ChEBI" id="CHEBI:64428"/>
        <dbReference type="ChEBI" id="CHEBI:74415"/>
        <dbReference type="ChEBI" id="CHEBI:74417"/>
        <dbReference type="EC" id="2.8.4.3"/>
    </reaction>
</comment>
<comment type="cofactor">
    <cofactor evidence="1">
        <name>[4Fe-4S] cluster</name>
        <dbReference type="ChEBI" id="CHEBI:49883"/>
    </cofactor>
    <text evidence="1">Binds 2 [4Fe-4S] clusters. One cluster is coordinated with 3 cysteines and an exchangeable S-adenosyl-L-methionine.</text>
</comment>
<comment type="subunit">
    <text evidence="1">Monomer.</text>
</comment>
<comment type="subcellular location">
    <subcellularLocation>
        <location evidence="1">Cytoplasm</location>
    </subcellularLocation>
</comment>
<comment type="similarity">
    <text evidence="1">Belongs to the methylthiotransferase family. MiaB subfamily.</text>
</comment>
<gene>
    <name evidence="1" type="primary">miaB</name>
    <name type="ordered locus">Plut_0237</name>
</gene>
<name>MIAB_CHLL3</name>
<sequence length="446" mass="49431">MPEGRRFYIQTFGCQMNEADSGIIARVLLDAGFRRADTEQDADVVLLNTCAVRENAVEKIAHLLEHLKGAKKRRKTLQVGVLGCVPQHQREEMFSRFPAIDFIAGPDSYRRLPSLIDDAASAVRSAMLDFDPSETYVGIRQVREGRISAFIPVMRGCNNMCAFCVVPFTRGRERSQPLAMVTGEARELAEAGYREITLLGQNVNSYSDPASGATFSALLDAVALAAPDVRIRFTTSHPKDISVGLIDTIARRPNICRHVHLPVQSGSDSVLRRMNRGHGISEYLEKIRIIRDALPGVTLSTDIIAGFCGEREEDHRATLDLLRTVRFDAAFMFHYSTREGTLAARTLPDDVAETDKKRRLQEIIDLQQEISAENNRRQVGTVAEVLAESESRRSPGRLLGRTDGNRAVVFDRGECMPGDLVRVRLTSSTSATLSGSREGLIRAFLS</sequence>
<accession>Q3B6A6</accession>
<keyword id="KW-0004">4Fe-4S</keyword>
<keyword id="KW-0963">Cytoplasm</keyword>
<keyword id="KW-0408">Iron</keyword>
<keyword id="KW-0411">Iron-sulfur</keyword>
<keyword id="KW-0479">Metal-binding</keyword>
<keyword id="KW-1185">Reference proteome</keyword>
<keyword id="KW-0949">S-adenosyl-L-methionine</keyword>
<keyword id="KW-0808">Transferase</keyword>
<keyword id="KW-0819">tRNA processing</keyword>
<organism>
    <name type="scientific">Chlorobium luteolum (strain DSM 273 / BCRC 81028 / 2530)</name>
    <name type="common">Pelodictyon luteolum</name>
    <dbReference type="NCBI Taxonomy" id="319225"/>
    <lineage>
        <taxon>Bacteria</taxon>
        <taxon>Pseudomonadati</taxon>
        <taxon>Chlorobiota</taxon>
        <taxon>Chlorobiia</taxon>
        <taxon>Chlorobiales</taxon>
        <taxon>Chlorobiaceae</taxon>
        <taxon>Chlorobium/Pelodictyon group</taxon>
        <taxon>Pelodictyon</taxon>
    </lineage>
</organism>
<dbReference type="EC" id="2.8.4.3" evidence="1"/>
<dbReference type="EMBL" id="CP000096">
    <property type="protein sequence ID" value="ABB23125.1"/>
    <property type="molecule type" value="Genomic_DNA"/>
</dbReference>
<dbReference type="RefSeq" id="WP_011357000.1">
    <property type="nucleotide sequence ID" value="NC_007512.1"/>
</dbReference>
<dbReference type="SMR" id="Q3B6A6"/>
<dbReference type="STRING" id="319225.Plut_0237"/>
<dbReference type="KEGG" id="plt:Plut_0237"/>
<dbReference type="eggNOG" id="COG0621">
    <property type="taxonomic scope" value="Bacteria"/>
</dbReference>
<dbReference type="HOGENOM" id="CLU_018697_2_1_10"/>
<dbReference type="OrthoDB" id="9805215at2"/>
<dbReference type="Proteomes" id="UP000002709">
    <property type="component" value="Chromosome"/>
</dbReference>
<dbReference type="GO" id="GO:0005829">
    <property type="term" value="C:cytosol"/>
    <property type="evidence" value="ECO:0007669"/>
    <property type="project" value="TreeGrafter"/>
</dbReference>
<dbReference type="GO" id="GO:0051539">
    <property type="term" value="F:4 iron, 4 sulfur cluster binding"/>
    <property type="evidence" value="ECO:0007669"/>
    <property type="project" value="UniProtKB-UniRule"/>
</dbReference>
<dbReference type="GO" id="GO:0046872">
    <property type="term" value="F:metal ion binding"/>
    <property type="evidence" value="ECO:0007669"/>
    <property type="project" value="UniProtKB-KW"/>
</dbReference>
<dbReference type="GO" id="GO:0035597">
    <property type="term" value="F:N6-isopentenyladenosine methylthiotransferase activity"/>
    <property type="evidence" value="ECO:0007669"/>
    <property type="project" value="TreeGrafter"/>
</dbReference>
<dbReference type="CDD" id="cd01335">
    <property type="entry name" value="Radical_SAM"/>
    <property type="match status" value="1"/>
</dbReference>
<dbReference type="FunFam" id="3.40.50.12160:FF:000003">
    <property type="entry name" value="CDK5 regulatory subunit-associated protein 1"/>
    <property type="match status" value="1"/>
</dbReference>
<dbReference type="FunFam" id="3.80.30.20:FF:000001">
    <property type="entry name" value="tRNA-2-methylthio-N(6)-dimethylallyladenosine synthase 2"/>
    <property type="match status" value="1"/>
</dbReference>
<dbReference type="Gene3D" id="3.40.50.12160">
    <property type="entry name" value="Methylthiotransferase, N-terminal domain"/>
    <property type="match status" value="1"/>
</dbReference>
<dbReference type="Gene3D" id="3.80.30.20">
    <property type="entry name" value="tm_1862 like domain"/>
    <property type="match status" value="1"/>
</dbReference>
<dbReference type="HAMAP" id="MF_01864">
    <property type="entry name" value="tRNA_metthiotr_MiaB"/>
    <property type="match status" value="1"/>
</dbReference>
<dbReference type="InterPro" id="IPR006638">
    <property type="entry name" value="Elp3/MiaA/NifB-like_rSAM"/>
</dbReference>
<dbReference type="InterPro" id="IPR005839">
    <property type="entry name" value="Methylthiotransferase"/>
</dbReference>
<dbReference type="InterPro" id="IPR020612">
    <property type="entry name" value="Methylthiotransferase_CS"/>
</dbReference>
<dbReference type="InterPro" id="IPR013848">
    <property type="entry name" value="Methylthiotransferase_N"/>
</dbReference>
<dbReference type="InterPro" id="IPR038135">
    <property type="entry name" value="Methylthiotransferase_N_sf"/>
</dbReference>
<dbReference type="InterPro" id="IPR006463">
    <property type="entry name" value="MiaB_methiolase"/>
</dbReference>
<dbReference type="InterPro" id="IPR007197">
    <property type="entry name" value="rSAM"/>
</dbReference>
<dbReference type="InterPro" id="IPR023404">
    <property type="entry name" value="rSAM_horseshoe"/>
</dbReference>
<dbReference type="InterPro" id="IPR002792">
    <property type="entry name" value="TRAM_dom"/>
</dbReference>
<dbReference type="NCBIfam" id="TIGR01574">
    <property type="entry name" value="miaB-methiolase"/>
    <property type="match status" value="1"/>
</dbReference>
<dbReference type="NCBIfam" id="TIGR00089">
    <property type="entry name" value="MiaB/RimO family radical SAM methylthiotransferase"/>
    <property type="match status" value="1"/>
</dbReference>
<dbReference type="PANTHER" id="PTHR43020">
    <property type="entry name" value="CDK5 REGULATORY SUBUNIT-ASSOCIATED PROTEIN 1"/>
    <property type="match status" value="1"/>
</dbReference>
<dbReference type="PANTHER" id="PTHR43020:SF2">
    <property type="entry name" value="MITOCHONDRIAL TRNA METHYLTHIOTRANSFERASE CDK5RAP1"/>
    <property type="match status" value="1"/>
</dbReference>
<dbReference type="Pfam" id="PF04055">
    <property type="entry name" value="Radical_SAM"/>
    <property type="match status" value="1"/>
</dbReference>
<dbReference type="Pfam" id="PF01938">
    <property type="entry name" value="TRAM"/>
    <property type="match status" value="1"/>
</dbReference>
<dbReference type="Pfam" id="PF00919">
    <property type="entry name" value="UPF0004"/>
    <property type="match status" value="1"/>
</dbReference>
<dbReference type="SFLD" id="SFLDF00273">
    <property type="entry name" value="(dimethylallyl)adenosine_tRNA"/>
    <property type="match status" value="1"/>
</dbReference>
<dbReference type="SFLD" id="SFLDG01082">
    <property type="entry name" value="B12-binding_domain_containing"/>
    <property type="match status" value="1"/>
</dbReference>
<dbReference type="SFLD" id="SFLDF00413">
    <property type="entry name" value="CDK5RAP1"/>
    <property type="match status" value="1"/>
</dbReference>
<dbReference type="SFLD" id="SFLDS00029">
    <property type="entry name" value="Radical_SAM"/>
    <property type="match status" value="1"/>
</dbReference>
<dbReference type="SMART" id="SM00729">
    <property type="entry name" value="Elp3"/>
    <property type="match status" value="1"/>
</dbReference>
<dbReference type="SUPFAM" id="SSF102114">
    <property type="entry name" value="Radical SAM enzymes"/>
    <property type="match status" value="1"/>
</dbReference>
<dbReference type="PROSITE" id="PS51449">
    <property type="entry name" value="MTTASE_N"/>
    <property type="match status" value="1"/>
</dbReference>
<dbReference type="PROSITE" id="PS01278">
    <property type="entry name" value="MTTASE_RADICAL"/>
    <property type="match status" value="1"/>
</dbReference>
<dbReference type="PROSITE" id="PS51918">
    <property type="entry name" value="RADICAL_SAM"/>
    <property type="match status" value="1"/>
</dbReference>
<dbReference type="PROSITE" id="PS50926">
    <property type="entry name" value="TRAM"/>
    <property type="match status" value="1"/>
</dbReference>
<evidence type="ECO:0000255" key="1">
    <source>
        <dbReference type="HAMAP-Rule" id="MF_01864"/>
    </source>
</evidence>
<evidence type="ECO:0000255" key="2">
    <source>
        <dbReference type="PROSITE-ProRule" id="PRU01266"/>
    </source>
</evidence>
<reference key="1">
    <citation type="submission" date="2005-08" db="EMBL/GenBank/DDBJ databases">
        <title>Complete sequence of Pelodictyon luteolum DSM 273.</title>
        <authorList>
            <consortium name="US DOE Joint Genome Institute"/>
            <person name="Copeland A."/>
            <person name="Lucas S."/>
            <person name="Lapidus A."/>
            <person name="Barry K."/>
            <person name="Detter J.C."/>
            <person name="Glavina T."/>
            <person name="Hammon N."/>
            <person name="Israni S."/>
            <person name="Pitluck S."/>
            <person name="Bryant D."/>
            <person name="Schmutz J."/>
            <person name="Larimer F."/>
            <person name="Land M."/>
            <person name="Kyrpides N."/>
            <person name="Ivanova N."/>
            <person name="Richardson P."/>
        </authorList>
    </citation>
    <scope>NUCLEOTIDE SEQUENCE [LARGE SCALE GENOMIC DNA]</scope>
    <source>
        <strain>DSM 273 / BCRC 81028 / 2530</strain>
    </source>
</reference>
<feature type="chain" id="PRO_0000374430" description="tRNA-2-methylthio-N(6)-dimethylallyladenosine synthase">
    <location>
        <begin position="1"/>
        <end position="446"/>
    </location>
</feature>
<feature type="domain" description="MTTase N-terminal" evidence="1">
    <location>
        <begin position="5"/>
        <end position="121"/>
    </location>
</feature>
<feature type="domain" description="Radical SAM core" evidence="2">
    <location>
        <begin position="143"/>
        <end position="373"/>
    </location>
</feature>
<feature type="domain" description="TRAM" evidence="1">
    <location>
        <begin position="376"/>
        <end position="439"/>
    </location>
</feature>
<feature type="binding site" evidence="1">
    <location>
        <position position="14"/>
    </location>
    <ligand>
        <name>[4Fe-4S] cluster</name>
        <dbReference type="ChEBI" id="CHEBI:49883"/>
        <label>1</label>
    </ligand>
</feature>
<feature type="binding site" evidence="1">
    <location>
        <position position="50"/>
    </location>
    <ligand>
        <name>[4Fe-4S] cluster</name>
        <dbReference type="ChEBI" id="CHEBI:49883"/>
        <label>1</label>
    </ligand>
</feature>
<feature type="binding site" evidence="1">
    <location>
        <position position="84"/>
    </location>
    <ligand>
        <name>[4Fe-4S] cluster</name>
        <dbReference type="ChEBI" id="CHEBI:49883"/>
        <label>1</label>
    </ligand>
</feature>
<feature type="binding site" evidence="1">
    <location>
        <position position="157"/>
    </location>
    <ligand>
        <name>[4Fe-4S] cluster</name>
        <dbReference type="ChEBI" id="CHEBI:49883"/>
        <label>2</label>
        <note>4Fe-4S-S-AdoMet</note>
    </ligand>
</feature>
<feature type="binding site" evidence="1">
    <location>
        <position position="161"/>
    </location>
    <ligand>
        <name>[4Fe-4S] cluster</name>
        <dbReference type="ChEBI" id="CHEBI:49883"/>
        <label>2</label>
        <note>4Fe-4S-S-AdoMet</note>
    </ligand>
</feature>
<feature type="binding site" evidence="1">
    <location>
        <position position="164"/>
    </location>
    <ligand>
        <name>[4Fe-4S] cluster</name>
        <dbReference type="ChEBI" id="CHEBI:49883"/>
        <label>2</label>
        <note>4Fe-4S-S-AdoMet</note>
    </ligand>
</feature>
<proteinExistence type="inferred from homology"/>